<organism>
    <name type="scientific">Homo sapiens</name>
    <name type="common">Human</name>
    <dbReference type="NCBI Taxonomy" id="9606"/>
    <lineage>
        <taxon>Eukaryota</taxon>
        <taxon>Metazoa</taxon>
        <taxon>Chordata</taxon>
        <taxon>Craniata</taxon>
        <taxon>Vertebrata</taxon>
        <taxon>Euteleostomi</taxon>
        <taxon>Mammalia</taxon>
        <taxon>Eutheria</taxon>
        <taxon>Euarchontoglires</taxon>
        <taxon>Primates</taxon>
        <taxon>Haplorrhini</taxon>
        <taxon>Catarrhini</taxon>
        <taxon>Hominidae</taxon>
        <taxon>Homo</taxon>
    </lineage>
</organism>
<name>SBP2L_HUMAN</name>
<sequence>MDRAPTEQNVKLSAEVEPFIPQKKSPDTFMIPMALPNDNGSVSGVEPTPIPSYLITCYPFVQENQSNRQFPLYNNDIRWQQPNPNPTGPYFAYPIISAQPPVSTEYTYYQLMPAPCAQVMGFYHPFPTPYSNTFQAANTVNAITTECTERPSQLGQVFPLSSHRSRNSNRGSVVPKQQLLQQHIKSKRPLVKNVATQKETNAAGPDSRSKIVLLVDASQQTDFPSDIANKSLSETTATMLWKSKGRRRRASHPTAESSSEQGASEADIDSDSGYCSPKHSNNQPAAGALRNPDSGTMNHVESSMCAGGVNWSNVTCQATQKKPWMEKNQTFSRGGRQTEQRNNSQVGFRCRGHSTSSERRQNLQKRPDNKHLSSSQSHRSDPNSESLYFEDEDGFQELNENGNAKDENIQQKLSSKVLDDLPENSPINIVQTPIPITTSVPKRAKSQKKKALAAALATAQEYSEISMEQKKLQEALSKAAGKKNKTPVQLDLGDMLAALEKQQQAMKARQITNTRPLSYTVVTAASFHTKDSTNRKPLTKSQPCLTSFNSVDIASSKAKKGKEKEIAKLKRPTALKKVILKEREEKKGRLTVDHNLLGSEEPTEMHLDFIDDLPQEIVSQEDTGLSMPSDTSLSPASQNSPYCMTPVSQGSPASSGIGSPMASSTITKIHSKRFREYCNQVLCKEIDECVTLLLQELVSFQERIYQKDPVRAKARRRLVMGLREVTKHMKLNKIKCVIISPNCEKIQSKGGLDEALYNVIAMAREQEIPFVFALGRKALGRCVNKLVPVSVVGIFNYFGAESLFNKLVELTEEARKAYKDMVAAMEQEQAEEALKNVKKVPHHMGHSRNPSAASAISFCSVISEPISEVNEKEYETNWRNMVETSDGLEASENEKEVSCKHSTSEKPSKLPFDTPPIGKQPSLVATGSTTSATSAGKSTASDKEEVKPDDLEWASQQSTETGSLDGSCRDLLNSSITSTTSTLVPGMLEEEEDEDEEEEEDYTHEPISVEVQLNSRIESWVSETQRTMETLQLGKTLNGSEEDNVEQSGEEEAEAPEVLEPGMDSEAWTADQQASPGQQKSSNCSSLNKEHSDSNYTTQTT</sequence>
<protein>
    <recommendedName>
        <fullName>Selenocysteine insertion sequence-binding protein 2-like</fullName>
        <shortName>SECIS-binding protein 2-like</shortName>
    </recommendedName>
</protein>
<gene>
    <name type="primary">SECISBP2L</name>
    <name type="synonym">KIAA0256</name>
</gene>
<proteinExistence type="evidence at protein level"/>
<accession>Q93073</accession>
<accession>Q8N767</accession>
<evidence type="ECO:0000250" key="1">
    <source>
        <dbReference type="UniProtKB" id="Q6A098"/>
    </source>
</evidence>
<evidence type="ECO:0000256" key="2">
    <source>
        <dbReference type="SAM" id="MobiDB-lite"/>
    </source>
</evidence>
<evidence type="ECO:0000269" key="3">
    <source>
    </source>
</evidence>
<evidence type="ECO:0000303" key="4">
    <source>
    </source>
</evidence>
<evidence type="ECO:0000305" key="5"/>
<keyword id="KW-0025">Alternative splicing</keyword>
<keyword id="KW-0597">Phosphoprotein</keyword>
<keyword id="KW-1267">Proteomics identification</keyword>
<keyword id="KW-1185">Reference proteome</keyword>
<feature type="chain" id="PRO_0000050739" description="Selenocysteine insertion sequence-binding protein 2-like">
    <location>
        <begin position="1"/>
        <end position="1101"/>
    </location>
</feature>
<feature type="region of interest" description="Disordered" evidence="2">
    <location>
        <begin position="154"/>
        <end position="206"/>
    </location>
</feature>
<feature type="region of interest" description="Disordered" evidence="2">
    <location>
        <begin position="240"/>
        <end position="295"/>
    </location>
</feature>
<feature type="region of interest" description="Disordered" evidence="2">
    <location>
        <begin position="320"/>
        <end position="387"/>
    </location>
</feature>
<feature type="region of interest" description="Disordered" evidence="2">
    <location>
        <begin position="884"/>
        <end position="1010"/>
    </location>
</feature>
<feature type="region of interest" description="Disordered" evidence="2">
    <location>
        <begin position="1030"/>
        <end position="1101"/>
    </location>
</feature>
<feature type="compositionally biased region" description="Low complexity" evidence="2">
    <location>
        <begin position="255"/>
        <end position="265"/>
    </location>
</feature>
<feature type="compositionally biased region" description="Polar residues" evidence="2">
    <location>
        <begin position="327"/>
        <end position="346"/>
    </location>
</feature>
<feature type="compositionally biased region" description="Basic and acidic residues" evidence="2">
    <location>
        <begin position="356"/>
        <end position="371"/>
    </location>
</feature>
<feature type="compositionally biased region" description="Basic and acidic residues" evidence="2">
    <location>
        <begin position="892"/>
        <end position="908"/>
    </location>
</feature>
<feature type="compositionally biased region" description="Low complexity" evidence="2">
    <location>
        <begin position="925"/>
        <end position="939"/>
    </location>
</feature>
<feature type="compositionally biased region" description="Basic and acidic residues" evidence="2">
    <location>
        <begin position="940"/>
        <end position="950"/>
    </location>
</feature>
<feature type="compositionally biased region" description="Polar residues" evidence="2">
    <location>
        <begin position="954"/>
        <end position="964"/>
    </location>
</feature>
<feature type="compositionally biased region" description="Acidic residues" evidence="2">
    <location>
        <begin position="988"/>
        <end position="1002"/>
    </location>
</feature>
<feature type="compositionally biased region" description="Polar residues" evidence="2">
    <location>
        <begin position="1030"/>
        <end position="1039"/>
    </location>
</feature>
<feature type="compositionally biased region" description="Acidic residues" evidence="2">
    <location>
        <begin position="1040"/>
        <end position="1057"/>
    </location>
</feature>
<feature type="compositionally biased region" description="Polar residues" evidence="2">
    <location>
        <begin position="1070"/>
        <end position="1087"/>
    </location>
</feature>
<feature type="modified residue" description="Phosphoserine" evidence="1">
    <location>
        <position position="276"/>
    </location>
</feature>
<feature type="splice variant" id="VSP_016342" description="In isoform 2." evidence="4">
    <location>
        <begin position="346"/>
        <end position="390"/>
    </location>
</feature>
<feature type="mutagenesis site" description="Loss of binding to SELV and TXNRD1 SECIS elements." evidence="3">
    <original>G</original>
    <variation>R</variation>
    <location>
        <position position="721"/>
    </location>
</feature>
<feature type="sequence conflict" description="In Ref. 3; AAH33001." evidence="5" ref="3">
    <original>L</original>
    <variation>F</variation>
    <location>
        <position position="756"/>
    </location>
</feature>
<reference key="1">
    <citation type="journal article" date="1996" name="DNA Res.">
        <title>Prediction of the coding sequences of unidentified human genes. VI. The coding sequences of 80 new genes (KIAA0201-KIAA0280) deduced by analysis of cDNA clones from cell line KG-1 and brain.</title>
        <authorList>
            <person name="Nagase T."/>
            <person name="Seki N."/>
            <person name="Ishikawa K."/>
            <person name="Ohira M."/>
            <person name="Kawarabayasi Y."/>
            <person name="Ohara O."/>
            <person name="Tanaka A."/>
            <person name="Kotani H."/>
            <person name="Miyajima N."/>
            <person name="Nomura N."/>
        </authorList>
    </citation>
    <scope>NUCLEOTIDE SEQUENCE [LARGE SCALE MRNA] (ISOFORM 2)</scope>
    <source>
        <tissue>Aortic endothelium</tissue>
    </source>
</reference>
<reference key="2">
    <citation type="submission" date="2005-01" db="EMBL/GenBank/DDBJ databases">
        <authorList>
            <person name="Nagase T."/>
            <person name="Seki N."/>
            <person name="Ishikawa K."/>
            <person name="Ohira M."/>
            <person name="Kawarabayasi Y."/>
            <person name="Ohara O."/>
            <person name="Tanaka A."/>
            <person name="Kotani H."/>
            <person name="Miyajima N."/>
            <person name="Nomura N."/>
        </authorList>
    </citation>
    <scope>SEQUENCE REVISION</scope>
</reference>
<reference key="3">
    <citation type="journal article" date="2004" name="Genome Res.">
        <title>The status, quality, and expansion of the NIH full-length cDNA project: the Mammalian Gene Collection (MGC).</title>
        <authorList>
            <consortium name="The MGC Project Team"/>
        </authorList>
    </citation>
    <scope>NUCLEOTIDE SEQUENCE [LARGE SCALE MRNA] (ISOFORM 1)</scope>
    <source>
        <tissue>Testis</tissue>
    </source>
</reference>
<reference key="4">
    <citation type="journal article" date="2012" name="PLoS ONE">
        <title>Selenocysteine insertion sequence binding protein 2L is implicated as a novel post-transcriptional regulator of selenoprotein expression.</title>
        <authorList>
            <person name="Donovan J."/>
            <person name="Copeland P.R."/>
        </authorList>
    </citation>
    <scope>BINDING TO SECIS ELEMENTS</scope>
    <scope>LACK OF FUNCTION IN SEC INCORPORATION</scope>
    <scope>MUTAGENESIS OF GLY-721</scope>
</reference>
<dbReference type="EMBL" id="D87445">
    <property type="protein sequence ID" value="BAA13386.3"/>
    <property type="status" value="ALT_INIT"/>
    <property type="molecule type" value="mRNA"/>
</dbReference>
<dbReference type="EMBL" id="BC033001">
    <property type="protein sequence ID" value="AAH33001.1"/>
    <property type="molecule type" value="mRNA"/>
</dbReference>
<dbReference type="CCDS" id="CCDS32234.1">
    <molecule id="Q93073-2"/>
</dbReference>
<dbReference type="CCDS" id="CCDS53942.1">
    <molecule id="Q93073-1"/>
</dbReference>
<dbReference type="RefSeq" id="NP_001180418.1">
    <molecule id="Q93073-1"/>
    <property type="nucleotide sequence ID" value="NM_001193489.2"/>
</dbReference>
<dbReference type="RefSeq" id="NP_055516.2">
    <molecule id="Q93073-2"/>
    <property type="nucleotide sequence ID" value="NM_014701.4"/>
</dbReference>
<dbReference type="SMR" id="Q93073"/>
<dbReference type="BioGRID" id="115077">
    <property type="interactions" value="37"/>
</dbReference>
<dbReference type="FunCoup" id="Q93073">
    <property type="interactions" value="228"/>
</dbReference>
<dbReference type="IntAct" id="Q93073">
    <property type="interactions" value="16"/>
</dbReference>
<dbReference type="MINT" id="Q93073"/>
<dbReference type="STRING" id="9606.ENSP00000453854"/>
<dbReference type="GlyGen" id="Q93073">
    <property type="glycosylation" value="3 sites, 1 O-linked glycan (1 site)"/>
</dbReference>
<dbReference type="iPTMnet" id="Q93073"/>
<dbReference type="PhosphoSitePlus" id="Q93073"/>
<dbReference type="BioMuta" id="SECISBP2L"/>
<dbReference type="DMDM" id="59803102"/>
<dbReference type="jPOST" id="Q93073"/>
<dbReference type="MassIVE" id="Q93073"/>
<dbReference type="PaxDb" id="9606-ENSP00000453854"/>
<dbReference type="PeptideAtlas" id="Q93073"/>
<dbReference type="ProteomicsDB" id="75699">
    <molecule id="Q93073-1"/>
</dbReference>
<dbReference type="ProteomicsDB" id="75700">
    <molecule id="Q93073-2"/>
</dbReference>
<dbReference type="Pumba" id="Q93073"/>
<dbReference type="Antibodypedia" id="50609">
    <property type="antibodies" value="12 antibodies from 8 providers"/>
</dbReference>
<dbReference type="DNASU" id="9728"/>
<dbReference type="Ensembl" id="ENST00000261847.7">
    <molecule id="Q93073-2"/>
    <property type="protein sequence ID" value="ENSP00000261847.3"/>
    <property type="gene ID" value="ENSG00000138593.9"/>
</dbReference>
<dbReference type="Ensembl" id="ENST00000559471.6">
    <molecule id="Q93073-1"/>
    <property type="protein sequence ID" value="ENSP00000453854.1"/>
    <property type="gene ID" value="ENSG00000138593.9"/>
</dbReference>
<dbReference type="GeneID" id="9728"/>
<dbReference type="KEGG" id="hsa:9728"/>
<dbReference type="MANE-Select" id="ENST00000559471.6">
    <property type="protein sequence ID" value="ENSP00000453854.1"/>
    <property type="RefSeq nucleotide sequence ID" value="NM_001193489.2"/>
    <property type="RefSeq protein sequence ID" value="NP_001180418.1"/>
</dbReference>
<dbReference type="UCSC" id="uc001zxd.4">
    <molecule id="Q93073-1"/>
    <property type="organism name" value="human"/>
</dbReference>
<dbReference type="AGR" id="HGNC:28997"/>
<dbReference type="CTD" id="9728"/>
<dbReference type="DisGeNET" id="9728"/>
<dbReference type="GeneCards" id="SECISBP2L"/>
<dbReference type="HGNC" id="HGNC:28997">
    <property type="gene designation" value="SECISBP2L"/>
</dbReference>
<dbReference type="HPA" id="ENSG00000138593">
    <property type="expression patterns" value="Low tissue specificity"/>
</dbReference>
<dbReference type="MIM" id="615756">
    <property type="type" value="gene"/>
</dbReference>
<dbReference type="neXtProt" id="NX_Q93073"/>
<dbReference type="OpenTargets" id="ENSG00000138593"/>
<dbReference type="PharmGKB" id="PA164725649"/>
<dbReference type="VEuPathDB" id="HostDB:ENSG00000138593"/>
<dbReference type="eggNOG" id="ENOG502QUP4">
    <property type="taxonomic scope" value="Eukaryota"/>
</dbReference>
<dbReference type="GeneTree" id="ENSGT00490000043356"/>
<dbReference type="HOGENOM" id="CLU_009625_0_0_1"/>
<dbReference type="InParanoid" id="Q93073"/>
<dbReference type="OMA" id="DYHSGCQ"/>
<dbReference type="OrthoDB" id="263617at2759"/>
<dbReference type="PAN-GO" id="Q93073">
    <property type="GO annotations" value="5 GO annotations based on evolutionary models"/>
</dbReference>
<dbReference type="PhylomeDB" id="Q93073"/>
<dbReference type="TreeFam" id="TF328821"/>
<dbReference type="PathwayCommons" id="Q93073"/>
<dbReference type="SignaLink" id="Q93073"/>
<dbReference type="SIGNOR" id="Q93073"/>
<dbReference type="BioGRID-ORCS" id="9728">
    <property type="hits" value="18 hits in 1159 CRISPR screens"/>
</dbReference>
<dbReference type="ChiTaRS" id="SECISBP2L">
    <property type="organism name" value="human"/>
</dbReference>
<dbReference type="GenomeRNAi" id="9728"/>
<dbReference type="Pharos" id="Q93073">
    <property type="development level" value="Tdark"/>
</dbReference>
<dbReference type="PRO" id="PR:Q93073"/>
<dbReference type="Proteomes" id="UP000005640">
    <property type="component" value="Chromosome 15"/>
</dbReference>
<dbReference type="RNAct" id="Q93073">
    <property type="molecule type" value="protein"/>
</dbReference>
<dbReference type="Bgee" id="ENSG00000138593">
    <property type="expression patterns" value="Expressed in corpus callosum and 215 other cell types or tissues"/>
</dbReference>
<dbReference type="ExpressionAtlas" id="Q93073">
    <property type="expression patterns" value="baseline and differential"/>
</dbReference>
<dbReference type="GO" id="GO:0005739">
    <property type="term" value="C:mitochondrion"/>
    <property type="evidence" value="ECO:0000318"/>
    <property type="project" value="GO_Central"/>
</dbReference>
<dbReference type="GO" id="GO:1990904">
    <property type="term" value="C:ribonucleoprotein complex"/>
    <property type="evidence" value="ECO:0000318"/>
    <property type="project" value="GO_Central"/>
</dbReference>
<dbReference type="GO" id="GO:0003730">
    <property type="term" value="F:mRNA 3'-UTR binding"/>
    <property type="evidence" value="ECO:0000318"/>
    <property type="project" value="GO_Central"/>
</dbReference>
<dbReference type="GO" id="GO:0043021">
    <property type="term" value="F:ribonucleoprotein complex binding"/>
    <property type="evidence" value="ECO:0000318"/>
    <property type="project" value="GO_Central"/>
</dbReference>
<dbReference type="GO" id="GO:0003723">
    <property type="term" value="F:RNA binding"/>
    <property type="evidence" value="ECO:0007005"/>
    <property type="project" value="UniProtKB"/>
</dbReference>
<dbReference type="GO" id="GO:0035368">
    <property type="term" value="F:selenocysteine insertion sequence binding"/>
    <property type="evidence" value="ECO:0007669"/>
    <property type="project" value="InterPro"/>
</dbReference>
<dbReference type="FunFam" id="3.30.1330.30:FF:000004">
    <property type="entry name" value="selenocysteine insertion sequence-binding protein 2"/>
    <property type="match status" value="1"/>
</dbReference>
<dbReference type="Gene3D" id="3.30.1330.30">
    <property type="match status" value="1"/>
</dbReference>
<dbReference type="InterPro" id="IPR029064">
    <property type="entry name" value="Ribosomal_eL30-like_sf"/>
</dbReference>
<dbReference type="InterPro" id="IPR004038">
    <property type="entry name" value="Ribosomal_eL8/eL30/eS12/Gad45"/>
</dbReference>
<dbReference type="InterPro" id="IPR040051">
    <property type="entry name" value="SECISBP2"/>
</dbReference>
<dbReference type="PANTHER" id="PTHR13284">
    <property type="entry name" value="GH01354P"/>
    <property type="match status" value="1"/>
</dbReference>
<dbReference type="PANTHER" id="PTHR13284:SF10">
    <property type="entry name" value="SELENOCYSTEINE INSERTION SEQUENCE-BINDING PROTEIN 2-LIKE"/>
    <property type="match status" value="1"/>
</dbReference>
<dbReference type="Pfam" id="PF01248">
    <property type="entry name" value="Ribosomal_L7Ae"/>
    <property type="match status" value="1"/>
</dbReference>
<dbReference type="SUPFAM" id="SSF55315">
    <property type="entry name" value="L30e-like"/>
    <property type="match status" value="1"/>
</dbReference>
<comment type="function">
    <text>Binds SECIS (Sec insertion sequence) elements present on selenocysteine (Sec) protein mRNAs, but does not promote Sec incorporation into selenoproteins in vitro.</text>
</comment>
<comment type="interaction">
    <interactant intactId="EBI-2805647">
        <id>Q93073</id>
    </interactant>
    <interactant intactId="EBI-742371">
        <id>Q96FJ2</id>
        <label>DYNLL2</label>
    </interactant>
    <organismsDiffer>false</organismsDiffer>
    <experiments>4</experiments>
</comment>
<comment type="alternative products">
    <event type="alternative splicing"/>
    <isoform>
        <id>Q93073-1</id>
        <name>1</name>
        <sequence type="displayed"/>
    </isoform>
    <isoform>
        <id>Q93073-2</id>
        <name>2</name>
        <sequence type="described" ref="VSP_016342"/>
    </isoform>
</comment>
<comment type="sequence caution" evidence="5">
    <conflict type="erroneous initiation">
        <sequence resource="EMBL-CDS" id="BAA13386"/>
    </conflict>
    <text>Extended N-terminus.</text>
</comment>